<comment type="function">
    <text evidence="1">Catalyzes the conversion of N-formimidoyl-L-glutamate to L-glutamate and formamide.</text>
</comment>
<comment type="catalytic activity">
    <reaction evidence="1">
        <text>N-formimidoyl-L-glutamate + H2O = formamide + L-glutamate</text>
        <dbReference type="Rhea" id="RHEA:22492"/>
        <dbReference type="ChEBI" id="CHEBI:15377"/>
        <dbReference type="ChEBI" id="CHEBI:16397"/>
        <dbReference type="ChEBI" id="CHEBI:29985"/>
        <dbReference type="ChEBI" id="CHEBI:58928"/>
        <dbReference type="EC" id="3.5.3.8"/>
    </reaction>
</comment>
<comment type="cofactor">
    <cofactor evidence="1">
        <name>Mn(2+)</name>
        <dbReference type="ChEBI" id="CHEBI:29035"/>
    </cofactor>
    <text evidence="1">Binds 2 manganese ions per subunit.</text>
</comment>
<comment type="pathway">
    <text evidence="1">Amino-acid degradation; L-histidine degradation into L-glutamate; L-glutamate from N-formimidoyl-L-glutamate (hydrolase route): step 1/1.</text>
</comment>
<comment type="similarity">
    <text evidence="1">Belongs to the arginase family.</text>
</comment>
<sequence length="313" mass="34493">MTQWYPVSPTLWQGRDDSAEAADARRLFQTVIRSEDFAPQDWPKQIALMGFACDEGVKRNAGRPGAAGAPDALRKALANMASHNGHERLVDLGNWVAQAPDLEGAQQTLRDAVRRCLCAGMRTLVLGGGHETAFGHGAGVLDAFAQESVGIINLDAHLDLRQTERATSGTPFRQLAQLCDAQRRVFHYACFGVSRAANTRALWREATRRNVTVVEDLDCYNALAQMTQFIARVDKIYLTIDLDVLPVWEMPAVSAPAALGVPLIQILRLIEPVCRSGKLQAADLVEFNPRFDKDGAAARVAARLGWQIAHWWR</sequence>
<keyword id="KW-0369">Histidine metabolism</keyword>
<keyword id="KW-0378">Hydrolase</keyword>
<keyword id="KW-0464">Manganese</keyword>
<keyword id="KW-0479">Metal-binding</keyword>
<keyword id="KW-1185">Reference proteome</keyword>
<proteinExistence type="inferred from homology"/>
<gene>
    <name evidence="1" type="primary">hutG</name>
    <name type="ordered locus">SARI_02138</name>
</gene>
<organism>
    <name type="scientific">Salmonella arizonae (strain ATCC BAA-731 / CDC346-86 / RSK2980)</name>
    <dbReference type="NCBI Taxonomy" id="41514"/>
    <lineage>
        <taxon>Bacteria</taxon>
        <taxon>Pseudomonadati</taxon>
        <taxon>Pseudomonadota</taxon>
        <taxon>Gammaproteobacteria</taxon>
        <taxon>Enterobacterales</taxon>
        <taxon>Enterobacteriaceae</taxon>
        <taxon>Salmonella</taxon>
    </lineage>
</organism>
<reference key="1">
    <citation type="submission" date="2007-11" db="EMBL/GenBank/DDBJ databases">
        <authorList>
            <consortium name="The Salmonella enterica serovar Arizonae Genome Sequencing Project"/>
            <person name="McClelland M."/>
            <person name="Sanderson E.K."/>
            <person name="Porwollik S."/>
            <person name="Spieth J."/>
            <person name="Clifton W.S."/>
            <person name="Fulton R."/>
            <person name="Chunyan W."/>
            <person name="Wollam A."/>
            <person name="Shah N."/>
            <person name="Pepin K."/>
            <person name="Bhonagiri V."/>
            <person name="Nash W."/>
            <person name="Johnson M."/>
            <person name="Thiruvilangam P."/>
            <person name="Wilson R."/>
        </authorList>
    </citation>
    <scope>NUCLEOTIDE SEQUENCE [LARGE SCALE GENOMIC DNA]</scope>
    <source>
        <strain>ATCC BAA-731 / CDC346-86 / RSK2980</strain>
    </source>
</reference>
<evidence type="ECO:0000255" key="1">
    <source>
        <dbReference type="HAMAP-Rule" id="MF_00737"/>
    </source>
</evidence>
<accession>A9MJF2</accession>
<feature type="chain" id="PRO_1000083413" description="Formimidoylglutamase">
    <location>
        <begin position="1"/>
        <end position="313"/>
    </location>
</feature>
<feature type="binding site" evidence="1">
    <location>
        <position position="130"/>
    </location>
    <ligand>
        <name>Mn(2+)</name>
        <dbReference type="ChEBI" id="CHEBI:29035"/>
        <label>1</label>
    </ligand>
</feature>
<feature type="binding site" evidence="1">
    <location>
        <position position="155"/>
    </location>
    <ligand>
        <name>Mn(2+)</name>
        <dbReference type="ChEBI" id="CHEBI:29035"/>
        <label>1</label>
    </ligand>
</feature>
<feature type="binding site" evidence="1">
    <location>
        <position position="155"/>
    </location>
    <ligand>
        <name>Mn(2+)</name>
        <dbReference type="ChEBI" id="CHEBI:29035"/>
        <label>2</label>
    </ligand>
</feature>
<feature type="binding site" evidence="1">
    <location>
        <position position="157"/>
    </location>
    <ligand>
        <name>Mn(2+)</name>
        <dbReference type="ChEBI" id="CHEBI:29035"/>
        <label>2</label>
    </ligand>
</feature>
<feature type="binding site" evidence="1">
    <location>
        <position position="159"/>
    </location>
    <ligand>
        <name>Mn(2+)</name>
        <dbReference type="ChEBI" id="CHEBI:29035"/>
        <label>1</label>
    </ligand>
</feature>
<feature type="binding site" evidence="1">
    <location>
        <position position="241"/>
    </location>
    <ligand>
        <name>Mn(2+)</name>
        <dbReference type="ChEBI" id="CHEBI:29035"/>
        <label>1</label>
    </ligand>
</feature>
<feature type="binding site" evidence="1">
    <location>
        <position position="241"/>
    </location>
    <ligand>
        <name>Mn(2+)</name>
        <dbReference type="ChEBI" id="CHEBI:29035"/>
        <label>2</label>
    </ligand>
</feature>
<feature type="binding site" evidence="1">
    <location>
        <position position="243"/>
    </location>
    <ligand>
        <name>Mn(2+)</name>
        <dbReference type="ChEBI" id="CHEBI:29035"/>
        <label>2</label>
    </ligand>
</feature>
<protein>
    <recommendedName>
        <fullName evidence="1">Formimidoylglutamase</fullName>
        <ecNumber evidence="1">3.5.3.8</ecNumber>
    </recommendedName>
    <alternativeName>
        <fullName evidence="1">Formiminoglutamase</fullName>
    </alternativeName>
    <alternativeName>
        <fullName evidence="1">Formiminoglutamate hydrolase</fullName>
    </alternativeName>
</protein>
<dbReference type="EC" id="3.5.3.8" evidence="1"/>
<dbReference type="EMBL" id="CP000880">
    <property type="protein sequence ID" value="ABX22015.1"/>
    <property type="molecule type" value="Genomic_DNA"/>
</dbReference>
<dbReference type="SMR" id="A9MJF2"/>
<dbReference type="STRING" id="41514.SARI_02138"/>
<dbReference type="KEGG" id="ses:SARI_02138"/>
<dbReference type="HOGENOM" id="CLU_039478_2_0_6"/>
<dbReference type="UniPathway" id="UPA00379">
    <property type="reaction ID" value="UER00552"/>
</dbReference>
<dbReference type="Proteomes" id="UP000002084">
    <property type="component" value="Chromosome"/>
</dbReference>
<dbReference type="GO" id="GO:0008783">
    <property type="term" value="F:agmatinase activity"/>
    <property type="evidence" value="ECO:0007669"/>
    <property type="project" value="TreeGrafter"/>
</dbReference>
<dbReference type="GO" id="GO:0050415">
    <property type="term" value="F:formimidoylglutamase activity"/>
    <property type="evidence" value="ECO:0007669"/>
    <property type="project" value="UniProtKB-UniRule"/>
</dbReference>
<dbReference type="GO" id="GO:0030145">
    <property type="term" value="F:manganese ion binding"/>
    <property type="evidence" value="ECO:0007669"/>
    <property type="project" value="UniProtKB-UniRule"/>
</dbReference>
<dbReference type="GO" id="GO:0019556">
    <property type="term" value="P:L-histidine catabolic process to glutamate and formamide"/>
    <property type="evidence" value="ECO:0007669"/>
    <property type="project" value="UniProtKB-UniPathway"/>
</dbReference>
<dbReference type="GO" id="GO:0019557">
    <property type="term" value="P:L-histidine catabolic process to glutamate and formate"/>
    <property type="evidence" value="ECO:0007669"/>
    <property type="project" value="UniProtKB-UniPathway"/>
</dbReference>
<dbReference type="GO" id="GO:0033389">
    <property type="term" value="P:putrescine biosynthetic process from arginine, via agmatine"/>
    <property type="evidence" value="ECO:0007669"/>
    <property type="project" value="TreeGrafter"/>
</dbReference>
<dbReference type="CDD" id="cd09988">
    <property type="entry name" value="Formimidoylglutamase"/>
    <property type="match status" value="1"/>
</dbReference>
<dbReference type="FunFam" id="3.40.800.10:FF:000010">
    <property type="entry name" value="Formimidoylglutamase"/>
    <property type="match status" value="1"/>
</dbReference>
<dbReference type="Gene3D" id="3.40.800.10">
    <property type="entry name" value="Ureohydrolase domain"/>
    <property type="match status" value="1"/>
</dbReference>
<dbReference type="HAMAP" id="MF_00737">
    <property type="entry name" value="Formimidoylglutam"/>
    <property type="match status" value="1"/>
</dbReference>
<dbReference type="InterPro" id="IPR005923">
    <property type="entry name" value="HutG"/>
</dbReference>
<dbReference type="InterPro" id="IPR006035">
    <property type="entry name" value="Ureohydrolase"/>
</dbReference>
<dbReference type="InterPro" id="IPR023696">
    <property type="entry name" value="Ureohydrolase_dom_sf"/>
</dbReference>
<dbReference type="NCBIfam" id="TIGR01227">
    <property type="entry name" value="hutG"/>
    <property type="match status" value="1"/>
</dbReference>
<dbReference type="PANTHER" id="PTHR11358">
    <property type="entry name" value="ARGINASE/AGMATINASE"/>
    <property type="match status" value="1"/>
</dbReference>
<dbReference type="PANTHER" id="PTHR11358:SF35">
    <property type="entry name" value="FORMIMIDOYLGLUTAMASE"/>
    <property type="match status" value="1"/>
</dbReference>
<dbReference type="Pfam" id="PF00491">
    <property type="entry name" value="Arginase"/>
    <property type="match status" value="1"/>
</dbReference>
<dbReference type="PIRSF" id="PIRSF036979">
    <property type="entry name" value="Arginase"/>
    <property type="match status" value="1"/>
</dbReference>
<dbReference type="SUPFAM" id="SSF52768">
    <property type="entry name" value="Arginase/deacetylase"/>
    <property type="match status" value="1"/>
</dbReference>
<dbReference type="PROSITE" id="PS51409">
    <property type="entry name" value="ARGINASE_2"/>
    <property type="match status" value="1"/>
</dbReference>
<name>HUTG_SALAR</name>